<protein>
    <recommendedName>
        <fullName>Group II intron-interrupted relaxase LtrB</fullName>
    </recommendedName>
    <alternativeName>
        <fullName>Conjugative nickase</fullName>
    </alternativeName>
</protein>
<gene>
    <name type="primary">ltrBE1</name>
</gene>
<gene>
    <name type="primary">ltrBE2</name>
</gene>
<organism>
    <name type="scientific">Lactococcus lactis subsp. cremoris</name>
    <name type="common">Streptococcus cremoris</name>
    <dbReference type="NCBI Taxonomy" id="1359"/>
    <lineage>
        <taxon>Bacteria</taxon>
        <taxon>Bacillati</taxon>
        <taxon>Bacillota</taxon>
        <taxon>Bacilli</taxon>
        <taxon>Lactobacillales</taxon>
        <taxon>Streptococcaceae</taxon>
        <taxon>Lactococcus</taxon>
    </lineage>
</organism>
<accession>Q48722</accession>
<proteinExistence type="inferred from homology"/>
<reference key="1">
    <citation type="journal article" date="1996" name="J. Bacteriol.">
        <title>Splicing of a group II intron involved in the conjugative transfer of pRS01 in Lactococci.</title>
        <authorList>
            <person name="Mills D.A."/>
            <person name="McKay L.L."/>
            <person name="Dunny G.M."/>
        </authorList>
    </citation>
    <scope>NUCLEOTIDE SEQUENCE [GENOMIC DNA]</scope>
    <source>
        <strain>NCDO 763 / ML3</strain>
    </source>
</reference>
<reference key="2">
    <citation type="journal article" date="1999" name="Antonie Van Leeuwenhoek">
        <title>Group II introns and expression of conjugative transfer functions in lactic acid bacteria.</title>
        <authorList>
            <person name="Dunny G.M."/>
            <person name="McKay L.L."/>
        </authorList>
    </citation>
    <scope>FUNCTION</scope>
</reference>
<dbReference type="EMBL" id="U50902">
    <property type="protein sequence ID" value="AAB06502.2"/>
    <property type="molecule type" value="Genomic_DNA"/>
</dbReference>
<dbReference type="SMR" id="Q48722"/>
<dbReference type="GO" id="GO:0046872">
    <property type="term" value="F:metal ion binding"/>
    <property type="evidence" value="ECO:0007669"/>
    <property type="project" value="UniProtKB-KW"/>
</dbReference>
<dbReference type="InterPro" id="IPR005094">
    <property type="entry name" value="Endonuclease_MobA/VirD2"/>
</dbReference>
<dbReference type="InterPro" id="IPR021112">
    <property type="entry name" value="LtrB_C"/>
</dbReference>
<dbReference type="InterPro" id="IPR048299">
    <property type="entry name" value="LtrB_central"/>
</dbReference>
<dbReference type="Pfam" id="PF03432">
    <property type="entry name" value="Relaxase"/>
    <property type="match status" value="1"/>
</dbReference>
<dbReference type="Pfam" id="PF11083">
    <property type="entry name" value="Relaxase_C"/>
    <property type="match status" value="1"/>
</dbReference>
<dbReference type="Pfam" id="PF20874">
    <property type="entry name" value="Relaxase_M"/>
    <property type="match status" value="1"/>
</dbReference>
<name>LTRB_LACLC</name>
<keyword id="KW-0184">Conjugation</keyword>
<keyword id="KW-0460">Magnesium</keyword>
<keyword id="KW-0464">Manganese</keyword>
<keyword id="KW-0479">Metal-binding</keyword>
<keyword id="KW-0499">Mobility protein</keyword>
<keyword id="KW-0614">Plasmid</keyword>
<geneLocation type="plasmid">
    <name>pRS01</name>
</geneLocation>
<sequence length="563" mass="64870">MVYTKHIIVHKLKHLRQAKDYVENAEKTLVNESNEDHLTNLFPYISNPDKTMSKQLVSGHGITNVYDAANEFIATKKLKALSKGTDFNFDPQTGKVRFNVESLEKNNAVLGHHLIQSFSPDDNLTPEQIHEIGRQTILEFTGGEYEFVIATHVDREHIHNHIIFNSTNLYTGKQFDWKVIPKEKTKSGKAYDVTKNNFEKVSDKIASRYGAKIIEKSPGNSHLKYTKWQTQSIYKSQIKQRLDYLLEMSSDIEDFKRKATALNLSFDFSGKWTTYRLLDEPQMKNTRGRNLDKNRPEKYNLESIIERLETNELSLTVDEVVERYEEKVDVVKQDFDYQVTVEKGQIDHMTSKGFYLNVDFGIADRGQIFIGGYKVDQLENRDCVLYLKKNETFRLLSEKEASFTKYLTGHDLAKQLGLYNGTVPLKKEPVISTINQLVDAINFLAEHGVTEGTQFNNMESQLMSALGEAEEKLYVIDNKIMELTKIAKLLIEKESDHSQAVINELENLGVGPSIKYQDIHQELQSEKMSRKILKNKFEQTVDEINTFNEIRVTTLEENKGKIL</sequence>
<comment type="function">
    <text evidence="2">Mediates initition of conjugal transfer of plasmid pRS01 possibly by introducing a single-stranded nick at the potential origin of transfer, to initiate single strand transfer from donor to recipient.</text>
</comment>
<comment type="cofactor">
    <cofactor evidence="3">
        <name>Mg(2+)</name>
        <dbReference type="ChEBI" id="CHEBI:18420"/>
    </cofactor>
    <cofactor evidence="3">
        <name>Mn(2+)</name>
        <dbReference type="ChEBI" id="CHEBI:29035"/>
    </cofactor>
</comment>
<comment type="miscellaneous">
    <text>The gene coding for this protein is interrupted by a group II intron, Ll.LtrB. Splicing of the intervening intron is necessary for proper protein activity and, therefore, conjugative transfer of pRS01, as the splicing event brings together the two conserved histidine residues proposed to function as ligands for the metal ion cofactor.</text>
</comment>
<comment type="similarity">
    <text evidence="3">Belongs to the mobilization (MOB) protein type 1 family.</text>
</comment>
<evidence type="ECO:0000255" key="1"/>
<evidence type="ECO:0000269" key="2">
    <source>
    </source>
</evidence>
<evidence type="ECO:0000305" key="3"/>
<feature type="chain" id="PRO_0000084514" description="Group II intron-interrupted relaxase LtrB">
    <location>
        <begin position="1"/>
        <end position="563"/>
    </location>
</feature>
<feature type="active site" evidence="1">
    <location>
        <position position="44"/>
    </location>
</feature>
<feature type="binding site" evidence="1">
    <location>
        <position position="159"/>
    </location>
    <ligand>
        <name>Mg(2+)</name>
        <dbReference type="ChEBI" id="CHEBI:18420"/>
    </ligand>
</feature>
<feature type="binding site" evidence="1">
    <location>
        <position position="161"/>
    </location>
    <ligand>
        <name>Mg(2+)</name>
        <dbReference type="ChEBI" id="CHEBI:18420"/>
    </ligand>
</feature>